<proteinExistence type="inferred from homology"/>
<evidence type="ECO:0000255" key="1">
    <source>
        <dbReference type="HAMAP-Rule" id="MF_02118"/>
    </source>
</evidence>
<evidence type="ECO:0000255" key="2">
    <source>
        <dbReference type="PROSITE-ProRule" id="PRU01067"/>
    </source>
</evidence>
<keyword id="KW-0012">Acyltransferase</keyword>
<keyword id="KW-1185">Reference proteome</keyword>
<keyword id="KW-0808">Transferase</keyword>
<comment type="function">
    <text evidence="1">Catalyzes the transfer of endogenously produced octanoic acid from octanoyl-acyl-carrier-protein onto the lipoyl domain of GcvH, an intermediate carrier during protein lipoylation.</text>
</comment>
<comment type="catalytic activity">
    <reaction evidence="1">
        <text>octanoyl-[ACP] + L-lysyl-[protein] = N(6)-octanoyl-L-lysyl-[protein] + holo-[ACP] + H(+)</text>
        <dbReference type="Rhea" id="RHEA:17665"/>
        <dbReference type="Rhea" id="RHEA-COMP:9636"/>
        <dbReference type="Rhea" id="RHEA-COMP:9685"/>
        <dbReference type="Rhea" id="RHEA-COMP:9752"/>
        <dbReference type="Rhea" id="RHEA-COMP:9928"/>
        <dbReference type="ChEBI" id="CHEBI:15378"/>
        <dbReference type="ChEBI" id="CHEBI:29969"/>
        <dbReference type="ChEBI" id="CHEBI:64479"/>
        <dbReference type="ChEBI" id="CHEBI:78463"/>
        <dbReference type="ChEBI" id="CHEBI:78809"/>
        <dbReference type="EC" id="2.3.1.181"/>
    </reaction>
</comment>
<comment type="pathway">
    <text evidence="1">Protein modification; protein lipoylation via endogenous pathway; protein N(6)-(lipoyl)lysine from octanoyl-[acyl-carrier-protein].</text>
</comment>
<comment type="subunit">
    <text evidence="1">Monomer.</text>
</comment>
<comment type="miscellaneous">
    <text evidence="1">In the reaction, the free carboxyl group of octanoic acid is attached via an amide linkage to the epsilon-amino group of a specific lysine residue of lipoyl domains of lipoate-dependent enzymes. The reaction proceeds via an octanoyl-thioester enzyme intermediate.</text>
</comment>
<comment type="similarity">
    <text evidence="1">Belongs to the octanoyltransferase LipM family.</text>
</comment>
<gene>
    <name evidence="1" type="primary">lipM</name>
    <name type="ordered locus">STH1918</name>
</gene>
<dbReference type="EC" id="2.3.1.181" evidence="1"/>
<dbReference type="EMBL" id="AP006840">
    <property type="protein sequence ID" value="BAD40903.1"/>
    <property type="molecule type" value="Genomic_DNA"/>
</dbReference>
<dbReference type="SMR" id="Q67N40"/>
<dbReference type="STRING" id="292459.STH1918"/>
<dbReference type="KEGG" id="sth:STH1918"/>
<dbReference type="eggNOG" id="COG0095">
    <property type="taxonomic scope" value="Bacteria"/>
</dbReference>
<dbReference type="HOGENOM" id="CLU_022986_5_0_9"/>
<dbReference type="OrthoDB" id="9788148at2"/>
<dbReference type="Proteomes" id="UP000000417">
    <property type="component" value="Chromosome"/>
</dbReference>
<dbReference type="GO" id="GO:0033819">
    <property type="term" value="F:lipoyl(octanoyl) transferase activity"/>
    <property type="evidence" value="ECO:0007669"/>
    <property type="project" value="UniProtKB-UniRule"/>
</dbReference>
<dbReference type="GO" id="GO:0009107">
    <property type="term" value="P:lipoate biosynthetic process"/>
    <property type="evidence" value="ECO:0007669"/>
    <property type="project" value="UniProtKB-UniRule"/>
</dbReference>
<dbReference type="GO" id="GO:0036211">
    <property type="term" value="P:protein modification process"/>
    <property type="evidence" value="ECO:0007669"/>
    <property type="project" value="InterPro"/>
</dbReference>
<dbReference type="CDD" id="cd16443">
    <property type="entry name" value="LplA"/>
    <property type="match status" value="1"/>
</dbReference>
<dbReference type="Gene3D" id="3.30.930.10">
    <property type="entry name" value="Bira Bifunctional Protein, Domain 2"/>
    <property type="match status" value="1"/>
</dbReference>
<dbReference type="HAMAP" id="MF_02118">
    <property type="entry name" value="LipM"/>
    <property type="match status" value="1"/>
</dbReference>
<dbReference type="InterPro" id="IPR045864">
    <property type="entry name" value="aa-tRNA-synth_II/BPL/LPL"/>
</dbReference>
<dbReference type="InterPro" id="IPR004143">
    <property type="entry name" value="BPL_LPL_catalytic"/>
</dbReference>
<dbReference type="InterPro" id="IPR024898">
    <property type="entry name" value="LipM"/>
</dbReference>
<dbReference type="InterPro" id="IPR050664">
    <property type="entry name" value="Octanoyltrans_LipM/LipL"/>
</dbReference>
<dbReference type="PANTHER" id="PTHR43679:SF2">
    <property type="entry name" value="OCTANOYL-[GCVH]:PROTEIN N-OCTANOYLTRANSFERASE"/>
    <property type="match status" value="1"/>
</dbReference>
<dbReference type="PANTHER" id="PTHR43679">
    <property type="entry name" value="OCTANOYLTRANSFERASE LIPM-RELATED"/>
    <property type="match status" value="1"/>
</dbReference>
<dbReference type="Pfam" id="PF21948">
    <property type="entry name" value="LplA-B_cat"/>
    <property type="match status" value="1"/>
</dbReference>
<dbReference type="SUPFAM" id="SSF55681">
    <property type="entry name" value="Class II aaRS and biotin synthetases"/>
    <property type="match status" value="1"/>
</dbReference>
<dbReference type="PROSITE" id="PS51733">
    <property type="entry name" value="BPL_LPL_CATALYTIC"/>
    <property type="match status" value="1"/>
</dbReference>
<sequence length="274" mass="30049">METNWRLLDTGHRPGPENMAIDEAIAMAHGRGEVPPTLRFYGWNPPAVSIGYFQSMLGEVDLDAVRAGGYGYVRRPTGGRLIFHHMELTYSVVIREELLPGGVIETYREISRGLLAGMAELGVPAALSGGDRDPRRADPDGFHTACFDTASAYELQVGGRKVAGSAQTRRDGVILQHGSILLDIDVPLLFRLMRLPEGIPAERLMARFRAKSTTLAEALGRPVSWAEARDAFAAGFARALGLTLTPGQLTEREEKEAQTLVEAKYGCDNWNMRK</sequence>
<organism>
    <name type="scientific">Symbiobacterium thermophilum (strain DSM 24528 / JCM 14929 / IAM 14863 / T)</name>
    <dbReference type="NCBI Taxonomy" id="292459"/>
    <lineage>
        <taxon>Bacteria</taxon>
        <taxon>Bacillati</taxon>
        <taxon>Bacillota</taxon>
        <taxon>Clostridia</taxon>
        <taxon>Eubacteriales</taxon>
        <taxon>Symbiobacteriaceae</taxon>
        <taxon>Symbiobacterium</taxon>
    </lineage>
</organism>
<accession>Q67N40</accession>
<feature type="chain" id="PRO_0000410865" description="Octanoyltransferase LipM">
    <location>
        <begin position="1"/>
        <end position="274"/>
    </location>
</feature>
<feature type="domain" description="BPL/LPL catalytic" evidence="2">
    <location>
        <begin position="32"/>
        <end position="244"/>
    </location>
</feature>
<feature type="active site" description="Acyl-thioester intermediate" evidence="1">
    <location>
        <position position="146"/>
    </location>
</feature>
<feature type="site" description="Lowers pKa of active site Cys" evidence="1">
    <location>
        <position position="161"/>
    </location>
</feature>
<reference key="1">
    <citation type="journal article" date="2004" name="Nucleic Acids Res.">
        <title>Genome sequence of Symbiobacterium thermophilum, an uncultivable bacterium that depends on microbial commensalism.</title>
        <authorList>
            <person name="Ueda K."/>
            <person name="Yamashita A."/>
            <person name="Ishikawa J."/>
            <person name="Shimada M."/>
            <person name="Watsuji T."/>
            <person name="Morimura K."/>
            <person name="Ikeda H."/>
            <person name="Hattori M."/>
            <person name="Beppu T."/>
        </authorList>
    </citation>
    <scope>NUCLEOTIDE SEQUENCE [LARGE SCALE GENOMIC DNA]</scope>
    <source>
        <strain>DSM 24528 / JCM 14929 / IAM 14863 / T</strain>
    </source>
</reference>
<protein>
    <recommendedName>
        <fullName evidence="1">Octanoyltransferase LipM</fullName>
        <ecNumber evidence="1">2.3.1.181</ecNumber>
    </recommendedName>
    <alternativeName>
        <fullName evidence="1">Octanoyl-[acyl-carrier-protein]:[GcvH] N-octanoyltransferase</fullName>
    </alternativeName>
</protein>
<name>LIPM_SYMTH</name>